<sequence>MALRDTAGVPPLLQGYSIVEWPDLTCDRHPSPTPYTSTQPLSSFNVQSRGSLLLAAISRMLGAYCGASDILLAVQVPNKRDYVFVRVNWSDNETWQEVAARTASQTRKTKSKLLVGDIRRAFELPDKQNPCPVLVRFTPSEEPSYFSDFPAVFIFDAKKSSLTLSAPKSLLHPSINDQLLSQIISLYHHAGANPKTPVSSNPTFPSHLTSVYDRLPEEDISNAYPHIPLVKFATEYLERRAKTNPHDIAVRWFPELSIDDSNLPSETSTYEELDRKASQLGRWLVTRGLAPEDRVAVCLSRDLIFHAAFFGIMRAGGCYVPIDPELPDERKAYIARDSGAKFVLTTSELSSQDLFGSSTIYVDEPEVANAIDEQDGGTFNIATPEGLGYMLYTSGTTGNPKGCLLTNHGLAQAIIALSSTAADVRMKDIREGRYLAVASIAFDVHLAETIVPMALGMPLLSAPRSQLLENLPQYVKLLGITHLGIVPSLIEATLNASKDNEGGLALRYIASGGEKMSDSILDKWANHPQVRLANFYGPSEVTIGCCARYMDSNTPRANIGRPLANVSGYVVDADLNILPRGGVGELVVEGPLVGRGYHGRPDLTEKVFLEWPEKGRWAYRTGDLVRMMPDSTLEILGRIDTQIKVRGVRIESEGISAIVRKAEVPSADMVLDATTVLAKHPALGSEQLVSFVTWDSTVPVSTRKSLRPSLSIPPRGFLKSIRSICNKELASYMRPNHVIPLNWLPLSSNGKTDTKILVELFKNLDIAQLASLISSEDDVSVSRDCTPLEAEVFEIVQRHAPSYAQRPHPELNIFECGLDSMGVIRFAADLKLTFGKAIPATEIMKKPALQDIAQLVHVSTMNHSLVGTPLPTIDAATHKHLSSIYSNDIEDILPPFPVQEGVLARSVEDTSLYVQHVILHLDSGTSMSQLQRSWESVIAAHPILRTVFYVDRSVWQVVFKSFNLPNSWSDRSLSVKTVEEFRARFYSRFAGEITKDINRNLSSIPPFRLAYFRCTGFNVLVLSIHHALYDGTSLPVLLRDVENSYLGLERVQKASLRAILAEISKHDLALAQQFWRDSFREFEWPRPAFRQGSNALASSVKYLSVHFTQKLSVIREVANKKQVTLQALLSFTFAYLIGSRLYDSNDVAFGVIRSGRMLPVDNVDVALCPTITVLPMRVRLGDANSTLVNIQNGISTMTEHEHVPLGKVQNWLRPGEPLFEVLFSVSVQQQEESKIWRPCDYEPPAADYALSVEAVVNVHDDTLIVRAAWLDGLITQDHVADLLHGFEKVTLTLDKGEELPLPSRRSPEPVRKVNDDEDPSAQVLLDPVVVADLQQTICDFLEIPTAILTNRVSFISLGLDSIKAVGLAKRIRALGYDVSSTEILRASTLKRLARVVSNNKQKKEEPYEHYAQLVRQVEGYISKSEVQLSPEDEVKIIPSTALQSGMLSQTVGSDGRLYVHAFPLTLSPGVDVQRLKSAWEAAAEKIDILRTSFHFIPDNGTWVQVIHSFNELKWSIQNLEGFVNVTSAVKSFVESIECTDEFAFSTPPFWLRVFTPLKGPSVLALVMHHALYDGGSVNSLLDVVQRIYRGESISYPVQFADLLPDFFRQELQNLERTLLPLHSLPSSDPYHISIRQVEVKDVDLKRLLTETEVTLQCLLQGALAQSLAILTRSADVVFGNVVSGRVGRGTEEVVGPILNTIPCRVHISDHDSVDALLQSIHRFNMEAASWQQASLRSIQKALMVDRIWDCLFTFQPLAPPPQAAIWSLDIEEHEDIHIQYPLHVEIEQNKDGFSVRCACQSNVLDKAGLLNFMDTLSNTVQQFVANPKERIGRTFSVPSPSNTDPTPTTVVAPAPATVQAGIIHPVLLSAIRDFAPDAEVTFDTPLPALGIDSITAIQISGKCRRSGLRLTATQILNSSTVKDLVLQATEIKATAKSTQVSDGVFKPLSSEEKDSIARRFADDAKYIENISVTTAGMKWAIGGWQRTNGSLFQYLFTFKLPDDVDHARFKNAWHMFIRRHELMRSTFATAPGGTEPRIVTFSKDFKFDHWAEIVVDDAVFYRRLLGKMKEMVSDPVPISRPPVRAALFRSDKQSYFIFHIHHFQYDAWSMQVLLNDLSSIYYDQEPWAVTDLRAFTSLFDPNEERLSVQRRFWEKALSPSFKPSLLPSLLNEVQGPLATPTGQPQLIMVPGALTNVSRYEEQARKLGVTLQTVLLAAWAQVQANRSRTSASTFGVWQVSRSGHIDGIERLAVPCVNVLPIHVKVGGSLVEVTKRIQVDLSERLSQPVIEHSDLVNISKWTGMSGETPIFNVNVNVVKLPVTLKRDGLVEPVKAPYYIPRIAVPTVTPTLDRLAVSPLCQNDVVVDIIVYEESDSILMSIEAVDNIMTEGQAKDIIQEWASVVSTTLSYKD</sequence>
<keyword id="KW-0436">Ligase</keyword>
<keyword id="KW-0511">Multifunctional enzyme</keyword>
<keyword id="KW-0596">Phosphopantetheine</keyword>
<keyword id="KW-0597">Phosphoprotein</keyword>
<keyword id="KW-1185">Reference proteome</keyword>
<keyword id="KW-0677">Repeat</keyword>
<name>CPF1_COPC7</name>
<protein>
    <recommendedName>
        <fullName evidence="6">Coprinoferrin synthetase</fullName>
        <ecNumber evidence="5">6.3.2.-</ecNumber>
    </recommendedName>
    <alternativeName>
        <fullName evidence="6">Coprinoferrin biosynthesis cluster protein cpf1</fullName>
    </alternativeName>
    <alternativeName>
        <fullName evidence="6">Nonribosomal peptide synthetase cpf1</fullName>
        <shortName evidence="6">NRPS cpf1</shortName>
    </alternativeName>
    <alternativeName>
        <fullName evidence="6">Siderophore biosynthesis protein cpf1</fullName>
    </alternativeName>
</protein>
<proteinExistence type="inferred from homology"/>
<gene>
    <name evidence="6" type="primary">cpf1</name>
    <name type="ORF">CC1G_04210</name>
</gene>
<reference key="1">
    <citation type="journal article" date="2010" name="Proc. Natl. Acad. Sci. U.S.A.">
        <title>Insights into evolution of multicellular fungi from the assembled chromosomes of the mushroom Coprinopsis cinerea (Coprinus cinereus).</title>
        <authorList>
            <person name="Stajich J.E."/>
            <person name="Wilke S.K."/>
            <person name="Ahren D."/>
            <person name="Au C.H."/>
            <person name="Birren B.W."/>
            <person name="Borodovsky M."/>
            <person name="Burns C."/>
            <person name="Canbaeck B."/>
            <person name="Casselton L.A."/>
            <person name="Cheng C.K."/>
            <person name="Deng J."/>
            <person name="Dietrich F.S."/>
            <person name="Fargo D.C."/>
            <person name="Farman M.L."/>
            <person name="Gathman A.C."/>
            <person name="Goldberg J."/>
            <person name="Guigo R."/>
            <person name="Hoegger P.J."/>
            <person name="Hooker J.B."/>
            <person name="Huggins A."/>
            <person name="James T.Y."/>
            <person name="Kamada T."/>
            <person name="Kilaru S."/>
            <person name="Kodira C."/>
            <person name="Kuees U."/>
            <person name="Kupfer D."/>
            <person name="Kwan H.S."/>
            <person name="Lomsadze A."/>
            <person name="Li W."/>
            <person name="Lilly W.W."/>
            <person name="Ma L.-J."/>
            <person name="Mackey A.J."/>
            <person name="Manning G."/>
            <person name="Martin F."/>
            <person name="Muraguchi H."/>
            <person name="Natvig D.O."/>
            <person name="Palmerini H."/>
            <person name="Ramesh M.A."/>
            <person name="Rehmeyer C.J."/>
            <person name="Roe B.A."/>
            <person name="Shenoy N."/>
            <person name="Stanke M."/>
            <person name="Ter-Hovhannisyan V."/>
            <person name="Tunlid A."/>
            <person name="Velagapudi R."/>
            <person name="Vision T.J."/>
            <person name="Zeng Q."/>
            <person name="Zolan M.E."/>
            <person name="Pukkila P.J."/>
        </authorList>
    </citation>
    <scope>NUCLEOTIDE SEQUENCE [LARGE SCALE GENOMIC DNA]</scope>
    <source>
        <strain>Okayama-7 / 130 / ATCC MYA-4618 / FGSC 9003</strain>
    </source>
</reference>
<reference key="2">
    <citation type="journal article" date="2019" name="Org. Lett.">
        <title>Genomic mushroom hunting decrypts coprinoferrin, a siderophore secondary metabolite vital to fungal cell development.</title>
        <authorList>
            <person name="Tsunematsu Y."/>
            <person name="Takanishi J."/>
            <person name="Asai S."/>
            <person name="Masuya T."/>
            <person name="Nakazawa T."/>
            <person name="Watanabe K."/>
        </authorList>
    </citation>
    <scope>FUNCTION</scope>
    <scope>DISRUPTION PHENOTYPE</scope>
    <scope>DOMAIN</scope>
</reference>
<accession>A8NF97</accession>
<comment type="function">
    <text evidence="5 8">Nonribosomal peptide synthase; part of the gene cluster that mediates the biosynthesis of coprinoferrin, an acylated tripeptide hydroxamate siderophore (PubMed:31496254). The biosynthesis of coprinoferrin depends on the hydroxylation of ornithine to N(5)-hydroxyornithine, catalyzed by the monooxygenase cpf2 (PubMed:31496254). The second step, the acylation of N(5)-hydroxy-L-ornithine to yield N(5)-hexanoyl-N(5)-hydroxyl-L-ornithine is catalyzed by a not yet identified acyltransferase (Probable). Finally, assembly of coprinoferrin is catalyzed by the nonribosomal peptide synthase (NRPS) cpf1 via amide bond formation between three N(5)-hexanoyl-N(5)-hydroxyl-L-ornithine molecules to release the linear trimer (PubMed:31496254). Interestingly, proteins seemingly not directly related to biosynthesis, such as transcription factors, replication factors, and autophagy-related proteins, are conserved among the clusters homologous to the coprinoferrin cluster, suggesting that the cluster may also play developmental and cell biological functions (Probable).</text>
</comment>
<comment type="pathway">
    <text evidence="5">Siderophore biosynthesis.</text>
</comment>
<comment type="domain">
    <text evidence="8">NRP synthetases are composed of discrete domains (adenylation (A), thiolation (T) or peptidyl carrier protein (PCP) and condensation (C) domains) which when grouped together are referred to as a single module. Each module is responsible for the recognition (via the A domain) and incorporation of a single amino acid into the growing peptide product. Thus, an NRP synthetase is generally composed of one or more modules and can terminate in a thioesterase domain (TE) that releases the newly synthesized peptide from the enzyme. Occasionally, methyltransferase domains (responsible for amino acid methylation) are present within the NRP synthetase. Cpf1 has the following architecture: A-T-C-T-C-T-C.</text>
</comment>
<comment type="disruption phenotype">
    <text evidence="5">Abolishes the production of coprinoferrin and fails to form fruiting bodies.</text>
</comment>
<comment type="similarity">
    <text evidence="7">Belongs to the NRP synthetase family.</text>
</comment>
<dbReference type="EC" id="6.3.2.-" evidence="5"/>
<dbReference type="EMBL" id="AACS02000002">
    <property type="protein sequence ID" value="EAU88504.2"/>
    <property type="molecule type" value="Genomic_DNA"/>
</dbReference>
<dbReference type="RefSeq" id="XP_001833231.2">
    <property type="nucleotide sequence ID" value="XM_001833179.2"/>
</dbReference>
<dbReference type="SMR" id="A8NF97"/>
<dbReference type="STRING" id="240176.A8NF97"/>
<dbReference type="GeneID" id="6009726"/>
<dbReference type="KEGG" id="cci:CC1G_04210"/>
<dbReference type="VEuPathDB" id="FungiDB:CC1G_04210"/>
<dbReference type="eggNOG" id="KOG1178">
    <property type="taxonomic scope" value="Eukaryota"/>
</dbReference>
<dbReference type="HOGENOM" id="CLU_000092_0_0_1"/>
<dbReference type="InParanoid" id="A8NF97"/>
<dbReference type="OMA" id="WQYVPVR"/>
<dbReference type="OrthoDB" id="416786at2759"/>
<dbReference type="Proteomes" id="UP000001861">
    <property type="component" value="Unassembled WGS sequence"/>
</dbReference>
<dbReference type="GO" id="GO:0005737">
    <property type="term" value="C:cytoplasm"/>
    <property type="evidence" value="ECO:0007669"/>
    <property type="project" value="TreeGrafter"/>
</dbReference>
<dbReference type="GO" id="GO:0016874">
    <property type="term" value="F:ligase activity"/>
    <property type="evidence" value="ECO:0007669"/>
    <property type="project" value="UniProtKB-KW"/>
</dbReference>
<dbReference type="GO" id="GO:0031177">
    <property type="term" value="F:phosphopantetheine binding"/>
    <property type="evidence" value="ECO:0007669"/>
    <property type="project" value="InterPro"/>
</dbReference>
<dbReference type="GO" id="GO:0043041">
    <property type="term" value="P:amino acid activation for nonribosomal peptide biosynthetic process"/>
    <property type="evidence" value="ECO:0007669"/>
    <property type="project" value="TreeGrafter"/>
</dbReference>
<dbReference type="GO" id="GO:0044550">
    <property type="term" value="P:secondary metabolite biosynthetic process"/>
    <property type="evidence" value="ECO:0007669"/>
    <property type="project" value="TreeGrafter"/>
</dbReference>
<dbReference type="CDD" id="cd05930">
    <property type="entry name" value="A_NRPS"/>
    <property type="match status" value="1"/>
</dbReference>
<dbReference type="Gene3D" id="3.30.300.30">
    <property type="match status" value="1"/>
</dbReference>
<dbReference type="Gene3D" id="1.10.1200.10">
    <property type="entry name" value="ACP-like"/>
    <property type="match status" value="3"/>
</dbReference>
<dbReference type="Gene3D" id="3.30.559.10">
    <property type="entry name" value="Chloramphenicol acetyltransferase-like domain"/>
    <property type="match status" value="3"/>
</dbReference>
<dbReference type="Gene3D" id="3.40.50.12780">
    <property type="entry name" value="N-terminal domain of ligase-like"/>
    <property type="match status" value="1"/>
</dbReference>
<dbReference type="Gene3D" id="3.30.559.30">
    <property type="entry name" value="Nonribosomal peptide synthetase, condensation domain"/>
    <property type="match status" value="4"/>
</dbReference>
<dbReference type="InterPro" id="IPR010071">
    <property type="entry name" value="AA_adenyl_dom"/>
</dbReference>
<dbReference type="InterPro" id="IPR036736">
    <property type="entry name" value="ACP-like_sf"/>
</dbReference>
<dbReference type="InterPro" id="IPR045851">
    <property type="entry name" value="AMP-bd_C_sf"/>
</dbReference>
<dbReference type="InterPro" id="IPR020845">
    <property type="entry name" value="AMP-binding_CS"/>
</dbReference>
<dbReference type="InterPro" id="IPR000873">
    <property type="entry name" value="AMP-dep_synth/lig_dom"/>
</dbReference>
<dbReference type="InterPro" id="IPR042099">
    <property type="entry name" value="ANL_N_sf"/>
</dbReference>
<dbReference type="InterPro" id="IPR023213">
    <property type="entry name" value="CAT-like_dom_sf"/>
</dbReference>
<dbReference type="InterPro" id="IPR001242">
    <property type="entry name" value="Condensatn"/>
</dbReference>
<dbReference type="InterPro" id="IPR020806">
    <property type="entry name" value="PKS_PP-bd"/>
</dbReference>
<dbReference type="InterPro" id="IPR009081">
    <property type="entry name" value="PP-bd_ACP"/>
</dbReference>
<dbReference type="InterPro" id="IPR006162">
    <property type="entry name" value="Ppantetheine_attach_site"/>
</dbReference>
<dbReference type="NCBIfam" id="TIGR01733">
    <property type="entry name" value="AA-adenyl-dom"/>
    <property type="match status" value="1"/>
</dbReference>
<dbReference type="PANTHER" id="PTHR45527:SF1">
    <property type="entry name" value="FATTY ACID SYNTHASE"/>
    <property type="match status" value="1"/>
</dbReference>
<dbReference type="PANTHER" id="PTHR45527">
    <property type="entry name" value="NONRIBOSOMAL PEPTIDE SYNTHETASE"/>
    <property type="match status" value="1"/>
</dbReference>
<dbReference type="Pfam" id="PF00501">
    <property type="entry name" value="AMP-binding"/>
    <property type="match status" value="1"/>
</dbReference>
<dbReference type="Pfam" id="PF00668">
    <property type="entry name" value="Condensation"/>
    <property type="match status" value="3"/>
</dbReference>
<dbReference type="Pfam" id="PF00550">
    <property type="entry name" value="PP-binding"/>
    <property type="match status" value="3"/>
</dbReference>
<dbReference type="SMART" id="SM00823">
    <property type="entry name" value="PKS_PP"/>
    <property type="match status" value="3"/>
</dbReference>
<dbReference type="SUPFAM" id="SSF56801">
    <property type="entry name" value="Acetyl-CoA synthetase-like"/>
    <property type="match status" value="1"/>
</dbReference>
<dbReference type="SUPFAM" id="SSF47336">
    <property type="entry name" value="ACP-like"/>
    <property type="match status" value="3"/>
</dbReference>
<dbReference type="SUPFAM" id="SSF52777">
    <property type="entry name" value="CoA-dependent acyltransferases"/>
    <property type="match status" value="6"/>
</dbReference>
<dbReference type="PROSITE" id="PS00455">
    <property type="entry name" value="AMP_BINDING"/>
    <property type="match status" value="1"/>
</dbReference>
<dbReference type="PROSITE" id="PS50075">
    <property type="entry name" value="CARRIER"/>
    <property type="match status" value="3"/>
</dbReference>
<dbReference type="PROSITE" id="PS00012">
    <property type="entry name" value="PHOSPHOPANTETHEINE"/>
    <property type="match status" value="1"/>
</dbReference>
<organism>
    <name type="scientific">Coprinopsis cinerea (strain Okayama-7 / 130 / ATCC MYA-4618 / FGSC 9003)</name>
    <name type="common">Inky cap fungus</name>
    <name type="synonym">Hormographiella aspergillata</name>
    <dbReference type="NCBI Taxonomy" id="240176"/>
    <lineage>
        <taxon>Eukaryota</taxon>
        <taxon>Fungi</taxon>
        <taxon>Dikarya</taxon>
        <taxon>Basidiomycota</taxon>
        <taxon>Agaricomycotina</taxon>
        <taxon>Agaricomycetes</taxon>
        <taxon>Agaricomycetidae</taxon>
        <taxon>Agaricales</taxon>
        <taxon>Agaricineae</taxon>
        <taxon>Psathyrellaceae</taxon>
        <taxon>Coprinopsis</taxon>
    </lineage>
</organism>
<evidence type="ECO:0000250" key="1">
    <source>
        <dbReference type="UniProtKB" id="A0A248AFK6"/>
    </source>
</evidence>
<evidence type="ECO:0000255" key="2"/>
<evidence type="ECO:0000255" key="3">
    <source>
        <dbReference type="PROSITE-ProRule" id="PRU00258"/>
    </source>
</evidence>
<evidence type="ECO:0000256" key="4">
    <source>
        <dbReference type="SAM" id="MobiDB-lite"/>
    </source>
</evidence>
<evidence type="ECO:0000269" key="5">
    <source>
    </source>
</evidence>
<evidence type="ECO:0000303" key="6">
    <source>
    </source>
</evidence>
<evidence type="ECO:0000305" key="7"/>
<evidence type="ECO:0000305" key="8">
    <source>
    </source>
</evidence>
<feature type="chain" id="PRO_0000452734" description="Coprinoferrin synthetase">
    <location>
        <begin position="1"/>
        <end position="2410"/>
    </location>
</feature>
<feature type="domain" description="Carrier 1" evidence="3">
    <location>
        <begin position="783"/>
        <end position="860"/>
    </location>
</feature>
<feature type="domain" description="Carrier 2" evidence="3">
    <location>
        <begin position="1324"/>
        <end position="1400"/>
    </location>
</feature>
<feature type="domain" description="Carrier 3" evidence="3">
    <location>
        <begin position="1858"/>
        <end position="1932"/>
    </location>
</feature>
<feature type="region of interest" description="Adenylation 1" evidence="1 2">
    <location>
        <begin position="237"/>
        <end position="646"/>
    </location>
</feature>
<feature type="region of interest" description="Condensation 1" evidence="1 2">
    <location>
        <begin position="891"/>
        <end position="1260"/>
    </location>
</feature>
<feature type="region of interest" description="Disordered" evidence="4">
    <location>
        <begin position="1298"/>
        <end position="1317"/>
    </location>
</feature>
<feature type="region of interest" description="Condensation 2" evidence="1 2">
    <location>
        <begin position="1436"/>
        <end position="1839"/>
    </location>
</feature>
<feature type="region of interest" description="Condensation 3" evidence="1 2">
    <location>
        <begin position="1992"/>
        <end position="2315"/>
    </location>
</feature>
<feature type="compositionally biased region" description="Basic and acidic residues" evidence="4">
    <location>
        <begin position="1305"/>
        <end position="1314"/>
    </location>
</feature>
<feature type="modified residue" description="O-(pantetheine 4'-phosphoryl)serine" evidence="3">
    <location>
        <position position="820"/>
    </location>
</feature>
<feature type="modified residue" description="O-(pantetheine 4'-phosphoryl)serine" evidence="3">
    <location>
        <position position="1361"/>
    </location>
</feature>
<feature type="modified residue" description="O-(pantetheine 4'-phosphoryl)serine" evidence="3">
    <location>
        <position position="1893"/>
    </location>
</feature>